<reference key="1">
    <citation type="journal article" date="2006" name="Gene">
        <title>Identification of two new members, XPLAC and XTES, of the XK family.</title>
        <authorList>
            <person name="Calenda G."/>
            <person name="Peng J."/>
            <person name="Redman C.M."/>
            <person name="Sha Q."/>
            <person name="Wu X."/>
            <person name="Lee S."/>
        </authorList>
    </citation>
    <scope>NUCLEOTIDE SEQUENCE [MRNA] (ISOFORM 1)</scope>
    <scope>SUBCELLULAR LOCATION</scope>
    <scope>TISSUE SPECIFICITY</scope>
    <source>
        <tissue>Placenta</tissue>
    </source>
</reference>
<reference key="2">
    <citation type="submission" date="2004-01" db="EMBL/GenBank/DDBJ databases">
        <title>A superfamily of XK-related genes (XRG) widely expressed in vertebrates and invertebrates.</title>
        <authorList>
            <person name="Huang C.-H."/>
            <person name="Chen Y."/>
        </authorList>
    </citation>
    <scope>NUCLEOTIDE SEQUENCE [MRNA] (ISOFORM 1)</scope>
</reference>
<reference key="3">
    <citation type="journal article" date="2004" name="Nat. Genet.">
        <title>Complete sequencing and characterization of 21,243 full-length human cDNAs.</title>
        <authorList>
            <person name="Ota T."/>
            <person name="Suzuki Y."/>
            <person name="Nishikawa T."/>
            <person name="Otsuki T."/>
            <person name="Sugiyama T."/>
            <person name="Irie R."/>
            <person name="Wakamatsu A."/>
            <person name="Hayashi K."/>
            <person name="Sato H."/>
            <person name="Nagai K."/>
            <person name="Kimura K."/>
            <person name="Makita H."/>
            <person name="Sekine M."/>
            <person name="Obayashi M."/>
            <person name="Nishi T."/>
            <person name="Shibahara T."/>
            <person name="Tanaka T."/>
            <person name="Ishii S."/>
            <person name="Yamamoto J."/>
            <person name="Saito K."/>
            <person name="Kawai Y."/>
            <person name="Isono Y."/>
            <person name="Nakamura Y."/>
            <person name="Nagahari K."/>
            <person name="Murakami K."/>
            <person name="Yasuda T."/>
            <person name="Iwayanagi T."/>
            <person name="Wagatsuma M."/>
            <person name="Shiratori A."/>
            <person name="Sudo H."/>
            <person name="Hosoiri T."/>
            <person name="Kaku Y."/>
            <person name="Kodaira H."/>
            <person name="Kondo H."/>
            <person name="Sugawara M."/>
            <person name="Takahashi M."/>
            <person name="Kanda K."/>
            <person name="Yokoi T."/>
            <person name="Furuya T."/>
            <person name="Kikkawa E."/>
            <person name="Omura Y."/>
            <person name="Abe K."/>
            <person name="Kamihara K."/>
            <person name="Katsuta N."/>
            <person name="Sato K."/>
            <person name="Tanikawa M."/>
            <person name="Yamazaki M."/>
            <person name="Ninomiya K."/>
            <person name="Ishibashi T."/>
            <person name="Yamashita H."/>
            <person name="Murakawa K."/>
            <person name="Fujimori K."/>
            <person name="Tanai H."/>
            <person name="Kimata M."/>
            <person name="Watanabe M."/>
            <person name="Hiraoka S."/>
            <person name="Chiba Y."/>
            <person name="Ishida S."/>
            <person name="Ono Y."/>
            <person name="Takiguchi S."/>
            <person name="Watanabe S."/>
            <person name="Yosida M."/>
            <person name="Hotuta T."/>
            <person name="Kusano J."/>
            <person name="Kanehori K."/>
            <person name="Takahashi-Fujii A."/>
            <person name="Hara H."/>
            <person name="Tanase T.-O."/>
            <person name="Nomura Y."/>
            <person name="Togiya S."/>
            <person name="Komai F."/>
            <person name="Hara R."/>
            <person name="Takeuchi K."/>
            <person name="Arita M."/>
            <person name="Imose N."/>
            <person name="Musashino K."/>
            <person name="Yuuki H."/>
            <person name="Oshima A."/>
            <person name="Sasaki N."/>
            <person name="Aotsuka S."/>
            <person name="Yoshikawa Y."/>
            <person name="Matsunawa H."/>
            <person name="Ichihara T."/>
            <person name="Shiohata N."/>
            <person name="Sano S."/>
            <person name="Moriya S."/>
            <person name="Momiyama H."/>
            <person name="Satoh N."/>
            <person name="Takami S."/>
            <person name="Terashima Y."/>
            <person name="Suzuki O."/>
            <person name="Nakagawa S."/>
            <person name="Senoh A."/>
            <person name="Mizoguchi H."/>
            <person name="Goto Y."/>
            <person name="Shimizu F."/>
            <person name="Wakebe H."/>
            <person name="Hishigaki H."/>
            <person name="Watanabe T."/>
            <person name="Sugiyama A."/>
            <person name="Takemoto M."/>
            <person name="Kawakami B."/>
            <person name="Yamazaki M."/>
            <person name="Watanabe K."/>
            <person name="Kumagai A."/>
            <person name="Itakura S."/>
            <person name="Fukuzumi Y."/>
            <person name="Fujimori Y."/>
            <person name="Komiyama M."/>
            <person name="Tashiro H."/>
            <person name="Tanigami A."/>
            <person name="Fujiwara T."/>
            <person name="Ono T."/>
            <person name="Yamada K."/>
            <person name="Fujii Y."/>
            <person name="Ozaki K."/>
            <person name="Hirao M."/>
            <person name="Ohmori Y."/>
            <person name="Kawabata A."/>
            <person name="Hikiji T."/>
            <person name="Kobatake N."/>
            <person name="Inagaki H."/>
            <person name="Ikema Y."/>
            <person name="Okamoto S."/>
            <person name="Okitani R."/>
            <person name="Kawakami T."/>
            <person name="Noguchi S."/>
            <person name="Itoh T."/>
            <person name="Shigeta K."/>
            <person name="Senba T."/>
            <person name="Matsumura K."/>
            <person name="Nakajima Y."/>
            <person name="Mizuno T."/>
            <person name="Morinaga M."/>
            <person name="Sasaki M."/>
            <person name="Togashi T."/>
            <person name="Oyama M."/>
            <person name="Hata H."/>
            <person name="Watanabe M."/>
            <person name="Komatsu T."/>
            <person name="Mizushima-Sugano J."/>
            <person name="Satoh T."/>
            <person name="Shirai Y."/>
            <person name="Takahashi Y."/>
            <person name="Nakagawa K."/>
            <person name="Okumura K."/>
            <person name="Nagase T."/>
            <person name="Nomura N."/>
            <person name="Kikuchi H."/>
            <person name="Masuho Y."/>
            <person name="Yamashita R."/>
            <person name="Nakai K."/>
            <person name="Yada T."/>
            <person name="Nakamura Y."/>
            <person name="Ohara O."/>
            <person name="Isogai T."/>
            <person name="Sugano S."/>
        </authorList>
    </citation>
    <scope>NUCLEOTIDE SEQUENCE [LARGE SCALE MRNA] (ISOFORM 2)</scope>
    <source>
        <tissue>Tongue</tissue>
    </source>
</reference>
<reference key="4">
    <citation type="journal article" date="2005" name="Nature">
        <title>The DNA sequence of the human X chromosome.</title>
        <authorList>
            <person name="Ross M.T."/>
            <person name="Grafham D.V."/>
            <person name="Coffey A.J."/>
            <person name="Scherer S."/>
            <person name="McLay K."/>
            <person name="Muzny D."/>
            <person name="Platzer M."/>
            <person name="Howell G.R."/>
            <person name="Burrows C."/>
            <person name="Bird C.P."/>
            <person name="Frankish A."/>
            <person name="Lovell F.L."/>
            <person name="Howe K.L."/>
            <person name="Ashurst J.L."/>
            <person name="Fulton R.S."/>
            <person name="Sudbrak R."/>
            <person name="Wen G."/>
            <person name="Jones M.C."/>
            <person name="Hurles M.E."/>
            <person name="Andrews T.D."/>
            <person name="Scott C.E."/>
            <person name="Searle S."/>
            <person name="Ramser J."/>
            <person name="Whittaker A."/>
            <person name="Deadman R."/>
            <person name="Carter N.P."/>
            <person name="Hunt S.E."/>
            <person name="Chen R."/>
            <person name="Cree A."/>
            <person name="Gunaratne P."/>
            <person name="Havlak P."/>
            <person name="Hodgson A."/>
            <person name="Metzker M.L."/>
            <person name="Richards S."/>
            <person name="Scott G."/>
            <person name="Steffen D."/>
            <person name="Sodergren E."/>
            <person name="Wheeler D.A."/>
            <person name="Worley K.C."/>
            <person name="Ainscough R."/>
            <person name="Ambrose K.D."/>
            <person name="Ansari-Lari M.A."/>
            <person name="Aradhya S."/>
            <person name="Ashwell R.I."/>
            <person name="Babbage A.K."/>
            <person name="Bagguley C.L."/>
            <person name="Ballabio A."/>
            <person name="Banerjee R."/>
            <person name="Barker G.E."/>
            <person name="Barlow K.F."/>
            <person name="Barrett I.P."/>
            <person name="Bates K.N."/>
            <person name="Beare D.M."/>
            <person name="Beasley H."/>
            <person name="Beasley O."/>
            <person name="Beck A."/>
            <person name="Bethel G."/>
            <person name="Blechschmidt K."/>
            <person name="Brady N."/>
            <person name="Bray-Allen S."/>
            <person name="Bridgeman A.M."/>
            <person name="Brown A.J."/>
            <person name="Brown M.J."/>
            <person name="Bonnin D."/>
            <person name="Bruford E.A."/>
            <person name="Buhay C."/>
            <person name="Burch P."/>
            <person name="Burford D."/>
            <person name="Burgess J."/>
            <person name="Burrill W."/>
            <person name="Burton J."/>
            <person name="Bye J.M."/>
            <person name="Carder C."/>
            <person name="Carrel L."/>
            <person name="Chako J."/>
            <person name="Chapman J.C."/>
            <person name="Chavez D."/>
            <person name="Chen E."/>
            <person name="Chen G."/>
            <person name="Chen Y."/>
            <person name="Chen Z."/>
            <person name="Chinault C."/>
            <person name="Ciccodicola A."/>
            <person name="Clark S.Y."/>
            <person name="Clarke G."/>
            <person name="Clee C.M."/>
            <person name="Clegg S."/>
            <person name="Clerc-Blankenburg K."/>
            <person name="Clifford K."/>
            <person name="Cobley V."/>
            <person name="Cole C.G."/>
            <person name="Conquer J.S."/>
            <person name="Corby N."/>
            <person name="Connor R.E."/>
            <person name="David R."/>
            <person name="Davies J."/>
            <person name="Davis C."/>
            <person name="Davis J."/>
            <person name="Delgado O."/>
            <person name="Deshazo D."/>
            <person name="Dhami P."/>
            <person name="Ding Y."/>
            <person name="Dinh H."/>
            <person name="Dodsworth S."/>
            <person name="Draper H."/>
            <person name="Dugan-Rocha S."/>
            <person name="Dunham A."/>
            <person name="Dunn M."/>
            <person name="Durbin K.J."/>
            <person name="Dutta I."/>
            <person name="Eades T."/>
            <person name="Ellwood M."/>
            <person name="Emery-Cohen A."/>
            <person name="Errington H."/>
            <person name="Evans K.L."/>
            <person name="Faulkner L."/>
            <person name="Francis F."/>
            <person name="Frankland J."/>
            <person name="Fraser A.E."/>
            <person name="Galgoczy P."/>
            <person name="Gilbert J."/>
            <person name="Gill R."/>
            <person name="Gloeckner G."/>
            <person name="Gregory S.G."/>
            <person name="Gribble S."/>
            <person name="Griffiths C."/>
            <person name="Grocock R."/>
            <person name="Gu Y."/>
            <person name="Gwilliam R."/>
            <person name="Hamilton C."/>
            <person name="Hart E.A."/>
            <person name="Hawes A."/>
            <person name="Heath P.D."/>
            <person name="Heitmann K."/>
            <person name="Hennig S."/>
            <person name="Hernandez J."/>
            <person name="Hinzmann B."/>
            <person name="Ho S."/>
            <person name="Hoffs M."/>
            <person name="Howden P.J."/>
            <person name="Huckle E.J."/>
            <person name="Hume J."/>
            <person name="Hunt P.J."/>
            <person name="Hunt A.R."/>
            <person name="Isherwood J."/>
            <person name="Jacob L."/>
            <person name="Johnson D."/>
            <person name="Jones S."/>
            <person name="de Jong P.J."/>
            <person name="Joseph S.S."/>
            <person name="Keenan S."/>
            <person name="Kelly S."/>
            <person name="Kershaw J.K."/>
            <person name="Khan Z."/>
            <person name="Kioschis P."/>
            <person name="Klages S."/>
            <person name="Knights A.J."/>
            <person name="Kosiura A."/>
            <person name="Kovar-Smith C."/>
            <person name="Laird G.K."/>
            <person name="Langford C."/>
            <person name="Lawlor S."/>
            <person name="Leversha M."/>
            <person name="Lewis L."/>
            <person name="Liu W."/>
            <person name="Lloyd C."/>
            <person name="Lloyd D.M."/>
            <person name="Loulseged H."/>
            <person name="Loveland J.E."/>
            <person name="Lovell J.D."/>
            <person name="Lozado R."/>
            <person name="Lu J."/>
            <person name="Lyne R."/>
            <person name="Ma J."/>
            <person name="Maheshwari M."/>
            <person name="Matthews L.H."/>
            <person name="McDowall J."/>
            <person name="McLaren S."/>
            <person name="McMurray A."/>
            <person name="Meidl P."/>
            <person name="Meitinger T."/>
            <person name="Milne S."/>
            <person name="Miner G."/>
            <person name="Mistry S.L."/>
            <person name="Morgan M."/>
            <person name="Morris S."/>
            <person name="Mueller I."/>
            <person name="Mullikin J.C."/>
            <person name="Nguyen N."/>
            <person name="Nordsiek G."/>
            <person name="Nyakatura G."/>
            <person name="O'dell C.N."/>
            <person name="Okwuonu G."/>
            <person name="Palmer S."/>
            <person name="Pandian R."/>
            <person name="Parker D."/>
            <person name="Parrish J."/>
            <person name="Pasternak S."/>
            <person name="Patel D."/>
            <person name="Pearce A.V."/>
            <person name="Pearson D.M."/>
            <person name="Pelan S.E."/>
            <person name="Perez L."/>
            <person name="Porter K.M."/>
            <person name="Ramsey Y."/>
            <person name="Reichwald K."/>
            <person name="Rhodes S."/>
            <person name="Ridler K.A."/>
            <person name="Schlessinger D."/>
            <person name="Schueler M.G."/>
            <person name="Sehra H.K."/>
            <person name="Shaw-Smith C."/>
            <person name="Shen H."/>
            <person name="Sheridan E.M."/>
            <person name="Shownkeen R."/>
            <person name="Skuce C.D."/>
            <person name="Smith M.L."/>
            <person name="Sotheran E.C."/>
            <person name="Steingruber H.E."/>
            <person name="Steward C.A."/>
            <person name="Storey R."/>
            <person name="Swann R.M."/>
            <person name="Swarbreck D."/>
            <person name="Tabor P.E."/>
            <person name="Taudien S."/>
            <person name="Taylor T."/>
            <person name="Teague B."/>
            <person name="Thomas K."/>
            <person name="Thorpe A."/>
            <person name="Timms K."/>
            <person name="Tracey A."/>
            <person name="Trevanion S."/>
            <person name="Tromans A.C."/>
            <person name="d'Urso M."/>
            <person name="Verduzco D."/>
            <person name="Villasana D."/>
            <person name="Waldron L."/>
            <person name="Wall M."/>
            <person name="Wang Q."/>
            <person name="Warren J."/>
            <person name="Warry G.L."/>
            <person name="Wei X."/>
            <person name="West A."/>
            <person name="Whitehead S.L."/>
            <person name="Whiteley M.N."/>
            <person name="Wilkinson J.E."/>
            <person name="Willey D.L."/>
            <person name="Williams G."/>
            <person name="Williams L."/>
            <person name="Williamson A."/>
            <person name="Williamson H."/>
            <person name="Wilming L."/>
            <person name="Woodmansey R.L."/>
            <person name="Wray P.W."/>
            <person name="Yen J."/>
            <person name="Zhang J."/>
            <person name="Zhou J."/>
            <person name="Zoghbi H."/>
            <person name="Zorilla S."/>
            <person name="Buck D."/>
            <person name="Reinhardt R."/>
            <person name="Poustka A."/>
            <person name="Rosenthal A."/>
            <person name="Lehrach H."/>
            <person name="Meindl A."/>
            <person name="Minx P.J."/>
            <person name="Hillier L.W."/>
            <person name="Willard H.F."/>
            <person name="Wilson R.K."/>
            <person name="Waterston R.H."/>
            <person name="Rice C.M."/>
            <person name="Vaudin M."/>
            <person name="Coulson A."/>
            <person name="Nelson D.L."/>
            <person name="Weinstock G."/>
            <person name="Sulston J.E."/>
            <person name="Durbin R.M."/>
            <person name="Hubbard T."/>
            <person name="Gibbs R.A."/>
            <person name="Beck S."/>
            <person name="Rogers J."/>
            <person name="Bentley D.R."/>
        </authorList>
    </citation>
    <scope>NUCLEOTIDE SEQUENCE [LARGE SCALE GENOMIC DNA]</scope>
</reference>
<reference key="5">
    <citation type="journal article" date="2004" name="Genome Res.">
        <title>The status, quality, and expansion of the NIH full-length cDNA project: the Mammalian Gene Collection (MGC).</title>
        <authorList>
            <consortium name="The MGC Project Team"/>
        </authorList>
    </citation>
    <scope>NUCLEOTIDE SEQUENCE [LARGE SCALE MRNA] (ISOFORM 1)</scope>
    <source>
        <tissue>Brain</tissue>
    </source>
</reference>
<keyword id="KW-0025">Alternative splicing</keyword>
<keyword id="KW-1003">Cell membrane</keyword>
<keyword id="KW-0472">Membrane</keyword>
<keyword id="KW-1185">Reference proteome</keyword>
<keyword id="KW-0812">Transmembrane</keyword>
<keyword id="KW-1133">Transmembrane helix</keyword>
<comment type="subcellular location">
    <subcellularLocation>
        <location evidence="2">Cell membrane</location>
        <topology evidence="2">Multi-pass membrane protein</topology>
    </subcellularLocation>
</comment>
<comment type="alternative products">
    <event type="alternative splicing"/>
    <isoform>
        <id>Q6PP77-1</id>
        <name>1</name>
        <sequence type="displayed"/>
    </isoform>
    <isoform>
        <id>Q6PP77-2</id>
        <name>2</name>
        <sequence type="described" ref="VSP_037520"/>
    </isoform>
</comment>
<comment type="tissue specificity">
    <text evidence="2">Expressed predominantly in the placenta, in syncytiotrophoblasts. Moderate levels in the adrenal gland, low levels in the trachea and very low levels in the bone marrow.</text>
</comment>
<comment type="similarity">
    <text evidence="4">Belongs to the XK family.</text>
</comment>
<comment type="sequence caution" evidence="4">
    <conflict type="erroneous initiation">
        <sequence resource="EMBL-CDS" id="AAI37011"/>
    </conflict>
</comment>
<comment type="sequence caution" evidence="4">
    <conflict type="erroneous initiation">
        <sequence resource="EMBL-CDS" id="AAI37012"/>
    </conflict>
</comment>
<comment type="sequence caution" evidence="4">
    <conflict type="erroneous initiation">
        <sequence resource="EMBL-CDS" id="AAT00456"/>
    </conflict>
</comment>
<comment type="sequence caution" evidence="4">
    <conflict type="erroneous initiation">
        <sequence resource="EMBL-CDS" id="AAT07088"/>
    </conflict>
</comment>
<sequence>MDRVYEIPEEPNVDPVSSLEEDVIRGANPRFTFPFSILFSTFLYCGEAASALYMVRIYRKNSETYWMTYTFSFFMFSSIMVQLTLIFVHRDLAKDKPLSLFMHLILLGPVIRCLEAMIKYLTLWKKEEQEEPYVSLTRKKMLIDGEEVLIEWEVGHSIRTLAMHRNAYKRMSQIQAFLGSVPQLTYQLYVSLISAEVPLGRVVLMVFSLVSVTYGATLCNMLAIQIKYDDYKIRLGPLEVLCITIWRTLEITSRLLILVLFSATLKLKAVPFLVLNFLIILFEPWIKFWRSGAQMPNNIEKNFSRVGTLVVLISVTILYAGINFSCWSALQLRLADRDLVDKGQNWGHMGLHYSVRLVENVIMVLVFKFFGVKVLLNYCHSLIALQLIIAYLISIGFMLLFFQYLHPLRSLFTHNVVDYLHCVCCHQHPRTRVENSEPPFETEARQSVV</sequence>
<evidence type="ECO:0000255" key="1"/>
<evidence type="ECO:0000269" key="2">
    <source>
    </source>
</evidence>
<evidence type="ECO:0000303" key="3">
    <source>
    </source>
</evidence>
<evidence type="ECO:0000305" key="4"/>
<organism>
    <name type="scientific">Homo sapiens</name>
    <name type="common">Human</name>
    <dbReference type="NCBI Taxonomy" id="9606"/>
    <lineage>
        <taxon>Eukaryota</taxon>
        <taxon>Metazoa</taxon>
        <taxon>Chordata</taxon>
        <taxon>Craniata</taxon>
        <taxon>Vertebrata</taxon>
        <taxon>Euteleostomi</taxon>
        <taxon>Mammalia</taxon>
        <taxon>Eutheria</taxon>
        <taxon>Euarchontoglires</taxon>
        <taxon>Primates</taxon>
        <taxon>Haplorrhini</taxon>
        <taxon>Catarrhini</taxon>
        <taxon>Hominidae</taxon>
        <taxon>Homo</taxon>
    </lineage>
</organism>
<feature type="chain" id="PRO_0000190772" description="XK-related protein 2">
    <location>
        <begin position="1"/>
        <end position="449"/>
    </location>
</feature>
<feature type="transmembrane region" description="Helical" evidence="1">
    <location>
        <begin position="35"/>
        <end position="55"/>
    </location>
</feature>
<feature type="transmembrane region" description="Helical" evidence="1">
    <location>
        <begin position="68"/>
        <end position="88"/>
    </location>
</feature>
<feature type="transmembrane region" description="Helical" evidence="1">
    <location>
        <begin position="98"/>
        <end position="118"/>
    </location>
</feature>
<feature type="transmembrane region" description="Helical" evidence="1">
    <location>
        <begin position="174"/>
        <end position="194"/>
    </location>
</feature>
<feature type="transmembrane region" description="Helical" evidence="1">
    <location>
        <begin position="202"/>
        <end position="222"/>
    </location>
</feature>
<feature type="transmembrane region" description="Helical" evidence="1">
    <location>
        <begin position="241"/>
        <end position="261"/>
    </location>
</feature>
<feature type="transmembrane region" description="Helical" evidence="1">
    <location>
        <begin position="269"/>
        <end position="289"/>
    </location>
</feature>
<feature type="transmembrane region" description="Helical" evidence="1">
    <location>
        <begin position="306"/>
        <end position="326"/>
    </location>
</feature>
<feature type="transmembrane region" description="Helical" evidence="1">
    <location>
        <begin position="357"/>
        <end position="377"/>
    </location>
</feature>
<feature type="transmembrane region" description="Helical" evidence="1">
    <location>
        <begin position="382"/>
        <end position="402"/>
    </location>
</feature>
<feature type="splice variant" id="VSP_037520" description="In isoform 2." evidence="3">
    <location>
        <begin position="1"/>
        <end position="204"/>
    </location>
</feature>
<feature type="sequence conflict" description="In Ref. 3; BAG59304." evidence="4" ref="3">
    <original>V</original>
    <variation>A</variation>
    <location>
        <position position="340"/>
    </location>
</feature>
<name>XKR2_HUMAN</name>
<proteinExistence type="evidence at transcript level"/>
<gene>
    <name type="primary">XKRX</name>
    <name type="synonym">XKR2</name>
    <name type="synonym">XPLAC</name>
    <name type="synonym">XRG2</name>
</gene>
<dbReference type="EMBL" id="AY589511">
    <property type="protein sequence ID" value="AAT00456.1"/>
    <property type="status" value="ALT_INIT"/>
    <property type="molecule type" value="mRNA"/>
</dbReference>
<dbReference type="EMBL" id="AY534239">
    <property type="protein sequence ID" value="AAT07088.1"/>
    <property type="status" value="ALT_INIT"/>
    <property type="molecule type" value="mRNA"/>
</dbReference>
<dbReference type="EMBL" id="AK296711">
    <property type="protein sequence ID" value="BAG59304.1"/>
    <property type="molecule type" value="mRNA"/>
</dbReference>
<dbReference type="EMBL" id="Z73417">
    <property type="status" value="NOT_ANNOTATED_CDS"/>
    <property type="molecule type" value="Genomic_DNA"/>
</dbReference>
<dbReference type="EMBL" id="BC137010">
    <property type="protein sequence ID" value="AAI37011.1"/>
    <property type="status" value="ALT_INIT"/>
    <property type="molecule type" value="mRNA"/>
</dbReference>
<dbReference type="EMBL" id="BC137011">
    <property type="protein sequence ID" value="AAI37012.1"/>
    <property type="status" value="ALT_INIT"/>
    <property type="molecule type" value="mRNA"/>
</dbReference>
<dbReference type="CCDS" id="CCDS14476.2">
    <molecule id="Q6PP77-1"/>
</dbReference>
<dbReference type="RefSeq" id="NP_997724.2">
    <molecule id="Q6PP77-1"/>
    <property type="nucleotide sequence ID" value="NM_212559.3"/>
</dbReference>
<dbReference type="RefSeq" id="XP_005262187.1">
    <property type="nucleotide sequence ID" value="XM_005262130.2"/>
</dbReference>
<dbReference type="RefSeq" id="XP_016885006.1">
    <molecule id="Q6PP77-2"/>
    <property type="nucleotide sequence ID" value="XM_017029517.2"/>
</dbReference>
<dbReference type="RefSeq" id="XP_054183030.1">
    <molecule id="Q6PP77-2"/>
    <property type="nucleotide sequence ID" value="XM_054327055.1"/>
</dbReference>
<dbReference type="BioGRID" id="135464">
    <property type="interactions" value="14"/>
</dbReference>
<dbReference type="FunCoup" id="Q6PP77">
    <property type="interactions" value="46"/>
</dbReference>
<dbReference type="IntAct" id="Q6PP77">
    <property type="interactions" value="10"/>
</dbReference>
<dbReference type="STRING" id="9606.ENSP00000362047"/>
<dbReference type="TCDB" id="2.A.112.1.6">
    <property type="family name" value="the kx blood-group antigen (kxa) family"/>
</dbReference>
<dbReference type="GlyGen" id="Q6PP77">
    <property type="glycosylation" value="1 site, 1 O-linked glycan (1 site)"/>
</dbReference>
<dbReference type="iPTMnet" id="Q6PP77"/>
<dbReference type="PhosphoSitePlus" id="Q6PP77"/>
<dbReference type="BioMuta" id="XKRX"/>
<dbReference type="DMDM" id="77417617"/>
<dbReference type="jPOST" id="Q6PP77"/>
<dbReference type="PaxDb" id="9606-ENSP00000362047"/>
<dbReference type="PeptideAtlas" id="Q6PP77"/>
<dbReference type="ProteomicsDB" id="67255">
    <molecule id="Q6PP77-1"/>
</dbReference>
<dbReference type="ProteomicsDB" id="67256">
    <molecule id="Q6PP77-2"/>
</dbReference>
<dbReference type="Antibodypedia" id="28561">
    <property type="antibodies" value="83 antibodies from 17 providers"/>
</dbReference>
<dbReference type="DNASU" id="402415"/>
<dbReference type="Ensembl" id="ENST00000372956.3">
    <molecule id="Q6PP77-1"/>
    <property type="protein sequence ID" value="ENSP00000362047.2"/>
    <property type="gene ID" value="ENSG00000182489.9"/>
</dbReference>
<dbReference type="GeneID" id="402415"/>
<dbReference type="KEGG" id="hsa:402415"/>
<dbReference type="MANE-Select" id="ENST00000372956.3">
    <property type="protein sequence ID" value="ENSP00000362047.2"/>
    <property type="RefSeq nucleotide sequence ID" value="NM_212559.3"/>
    <property type="RefSeq protein sequence ID" value="NP_997724.2"/>
</dbReference>
<dbReference type="UCSC" id="uc004egn.3">
    <molecule id="Q6PP77-1"/>
    <property type="organism name" value="human"/>
</dbReference>
<dbReference type="AGR" id="HGNC:29845"/>
<dbReference type="CTD" id="402415"/>
<dbReference type="GeneCards" id="XKRX"/>
<dbReference type="HGNC" id="HGNC:29845">
    <property type="gene designation" value="XKRX"/>
</dbReference>
<dbReference type="HPA" id="ENSG00000182489">
    <property type="expression patterns" value="Tissue enhanced (lymphoid tissue, skin)"/>
</dbReference>
<dbReference type="MIM" id="300684">
    <property type="type" value="gene"/>
</dbReference>
<dbReference type="neXtProt" id="NX_Q6PP77"/>
<dbReference type="OpenTargets" id="ENSG00000182489"/>
<dbReference type="PharmGKB" id="PA134962569"/>
<dbReference type="VEuPathDB" id="HostDB:ENSG00000182489"/>
<dbReference type="eggNOG" id="ENOG502QSH6">
    <property type="taxonomic scope" value="Eukaryota"/>
</dbReference>
<dbReference type="GeneTree" id="ENSGT00390000003231"/>
<dbReference type="HOGENOM" id="CLU_037429_1_0_1"/>
<dbReference type="InParanoid" id="Q6PP77"/>
<dbReference type="OMA" id="SETYWMA"/>
<dbReference type="OrthoDB" id="10037417at2759"/>
<dbReference type="PAN-GO" id="Q6PP77">
    <property type="GO annotations" value="0 GO annotations based on evolutionary models"/>
</dbReference>
<dbReference type="PhylomeDB" id="Q6PP77"/>
<dbReference type="TreeFam" id="TF331465"/>
<dbReference type="PathwayCommons" id="Q6PP77"/>
<dbReference type="SignaLink" id="Q6PP77"/>
<dbReference type="BioGRID-ORCS" id="402415">
    <property type="hits" value="9 hits in 763 CRISPR screens"/>
</dbReference>
<dbReference type="ChiTaRS" id="XKRX">
    <property type="organism name" value="human"/>
</dbReference>
<dbReference type="GenomeRNAi" id="402415"/>
<dbReference type="Pharos" id="Q6PP77">
    <property type="development level" value="Tbio"/>
</dbReference>
<dbReference type="PRO" id="PR:Q6PP77"/>
<dbReference type="Proteomes" id="UP000005640">
    <property type="component" value="Chromosome X"/>
</dbReference>
<dbReference type="RNAct" id="Q6PP77">
    <property type="molecule type" value="protein"/>
</dbReference>
<dbReference type="Bgee" id="ENSG00000182489">
    <property type="expression patterns" value="Expressed in primordial germ cell in gonad and 75 other cell types or tissues"/>
</dbReference>
<dbReference type="ExpressionAtlas" id="Q6PP77">
    <property type="expression patterns" value="baseline and differential"/>
</dbReference>
<dbReference type="GO" id="GO:0005886">
    <property type="term" value="C:plasma membrane"/>
    <property type="evidence" value="ECO:0007669"/>
    <property type="project" value="UniProtKB-SubCell"/>
</dbReference>
<dbReference type="InterPro" id="IPR018629">
    <property type="entry name" value="XK-rel"/>
</dbReference>
<dbReference type="InterPro" id="IPR051773">
    <property type="entry name" value="XK-related_adapter"/>
</dbReference>
<dbReference type="PANTHER" id="PTHR14297">
    <property type="entry name" value="MEMBRANE TRANSPORT PROTEIN XK FAMILY MEMBER"/>
    <property type="match status" value="1"/>
</dbReference>
<dbReference type="PANTHER" id="PTHR14297:SF4">
    <property type="entry name" value="XK-RELATED PROTEIN 2"/>
    <property type="match status" value="1"/>
</dbReference>
<dbReference type="Pfam" id="PF09815">
    <property type="entry name" value="XK-related"/>
    <property type="match status" value="1"/>
</dbReference>
<accession>Q6PP77</accession>
<accession>B2RNN6</accession>
<accession>B4DKU2</accession>
<accession>Q5H9J6</accession>
<protein>
    <recommendedName>
        <fullName>XK-related protein 2</fullName>
    </recommendedName>
    <alternativeName>
        <fullName>Membrane protein XPLAC</fullName>
    </alternativeName>
    <alternativeName>
        <fullName>X Kell blood group-related, X-linked</fullName>
    </alternativeName>
</protein>